<accession>Q4D3W2</accession>
<accession>O76140</accession>
<proteinExistence type="evidence at protein level"/>
<name>PYRD_TRYCC</name>
<evidence type="ECO:0000250" key="1"/>
<evidence type="ECO:0000269" key="2">
    <source>
    </source>
</evidence>
<evidence type="ECO:0000269" key="3">
    <source>
    </source>
</evidence>
<evidence type="ECO:0000269" key="4">
    <source>
    </source>
</evidence>
<evidence type="ECO:0000305" key="5"/>
<evidence type="ECO:0007829" key="6">
    <source>
        <dbReference type="PDB" id="2DJL"/>
    </source>
</evidence>
<evidence type="ECO:0007829" key="7">
    <source>
        <dbReference type="PDB" id="2E6F"/>
    </source>
</evidence>
<organism>
    <name type="scientific">Trypanosoma cruzi (strain CL Brener)</name>
    <dbReference type="NCBI Taxonomy" id="353153"/>
    <lineage>
        <taxon>Eukaryota</taxon>
        <taxon>Discoba</taxon>
        <taxon>Euglenozoa</taxon>
        <taxon>Kinetoplastea</taxon>
        <taxon>Metakinetoplastina</taxon>
        <taxon>Trypanosomatida</taxon>
        <taxon>Trypanosomatidae</taxon>
        <taxon>Trypanosoma</taxon>
        <taxon>Schizotrypanum</taxon>
    </lineage>
</organism>
<comment type="function">
    <text>Catalyzes the conversion of dihydroorotate to orotate with fumarate as the electron acceptor. Molecular oxygen can replace fumarate in vitro.</text>
</comment>
<comment type="catalytic activity">
    <reaction>
        <text>(S)-dihydroorotate + fumarate = orotate + succinate</text>
        <dbReference type="Rhea" id="RHEA:30059"/>
        <dbReference type="ChEBI" id="CHEBI:29806"/>
        <dbReference type="ChEBI" id="CHEBI:30031"/>
        <dbReference type="ChEBI" id="CHEBI:30839"/>
        <dbReference type="ChEBI" id="CHEBI:30864"/>
        <dbReference type="EC" id="1.3.98.1"/>
    </reaction>
</comment>
<comment type="cofactor">
    <cofactor evidence="4">
        <name>FMN</name>
        <dbReference type="ChEBI" id="CHEBI:58210"/>
    </cofactor>
    <text evidence="4">Binds 1 FMN per subunit.</text>
</comment>
<comment type="biophysicochemical properties">
    <kinetics>
        <KM evidence="2">57.3 uM for dihydroorotate</KM>
        <KM evidence="2">62.2 uM for fumarate</KM>
    </kinetics>
    <phDependence>
        <text evidence="2">Optimum pH is 7.</text>
    </phDependence>
    <temperatureDependence>
        <text evidence="2">Optimum temperature is 37 degrees Celsius.</text>
    </temperatureDependence>
</comment>
<comment type="pathway">
    <text>Pyrimidine metabolism; UMP biosynthesis via de novo pathway.</text>
</comment>
<comment type="subunit">
    <text evidence="3">Homodimer.</text>
</comment>
<comment type="subcellular location">
    <subcellularLocation>
        <location evidence="1">Cytoplasm</location>
    </subcellularLocation>
</comment>
<comment type="similarity">
    <text evidence="5">Belongs to the dihydroorotate dehydrogenase family. Type 1 subfamily.</text>
</comment>
<sequence>MMCLKLNLLDHVFANPFMNAAGVLCSTEEDLRCMTASSSGALVSKSCTSAPRDGNPEPRYMAFPLGSINSMGLPNLGFDFYLKYASDLHDYSKKPLFLSISGLSVEENVAMVRRLAPVAQEKGVLLELNLSCPNVPGKPQVAYDFEAMRTYLQQVSLAYGLPFGVKMPPYFDIAHFDTAAAVLNEFPLVKFVTCVNSVGNGLVIDAESESVVIKPKQGFGGLGGKYILPTALANVNAFYRRCPDKLVFGCGGVYSGEDAFLHILAGASMVQVGTALQEEGPGIFTRLEDELLEIMARKGYRTLEEFRGRVKTIE</sequence>
<dbReference type="EC" id="1.3.98.1"/>
<dbReference type="EMBL" id="AAHK01001070">
    <property type="protein sequence ID" value="EAN87213.1"/>
    <property type="molecule type" value="Genomic_DNA"/>
</dbReference>
<dbReference type="EMBL" id="AB010286">
    <property type="protein sequence ID" value="BAA31360.1"/>
    <property type="molecule type" value="Genomic_DNA"/>
</dbReference>
<dbReference type="EMBL" id="AB017765">
    <property type="protein sequence ID" value="BAA74526.1"/>
    <property type="molecule type" value="Genomic_DNA"/>
</dbReference>
<dbReference type="EMBL" id="AB212956">
    <property type="protein sequence ID" value="BAE48283.1"/>
    <property type="molecule type" value="Genomic_DNA"/>
</dbReference>
<dbReference type="PIR" id="T30523">
    <property type="entry name" value="T30523"/>
</dbReference>
<dbReference type="RefSeq" id="XP_809064.1">
    <property type="nucleotide sequence ID" value="XM_803971.1"/>
</dbReference>
<dbReference type="PDB" id="2DJL">
    <property type="method" value="X-ray"/>
    <property type="resolution" value="1.38 A"/>
    <property type="chains" value="A/B=1-314"/>
</dbReference>
<dbReference type="PDB" id="2DJX">
    <property type="method" value="X-ray"/>
    <property type="resolution" value="1.58 A"/>
    <property type="chains" value="A/B=1-314"/>
</dbReference>
<dbReference type="PDB" id="2E68">
    <property type="method" value="X-ray"/>
    <property type="resolution" value="1.38 A"/>
    <property type="chains" value="A/B=1-314"/>
</dbReference>
<dbReference type="PDB" id="2E6A">
    <property type="method" value="X-ray"/>
    <property type="resolution" value="1.64 A"/>
    <property type="chains" value="A/B=1-314"/>
</dbReference>
<dbReference type="PDB" id="2E6D">
    <property type="method" value="X-ray"/>
    <property type="resolution" value="1.94 A"/>
    <property type="chains" value="A/B=1-314"/>
</dbReference>
<dbReference type="PDB" id="2E6F">
    <property type="method" value="X-ray"/>
    <property type="resolution" value="1.26 A"/>
    <property type="chains" value="A/B=1-314"/>
</dbReference>
<dbReference type="PDB" id="3C3N">
    <property type="method" value="X-ray"/>
    <property type="resolution" value="2.20 A"/>
    <property type="chains" value="A/B/C/D=3-314"/>
</dbReference>
<dbReference type="PDB" id="3W1A">
    <property type="method" value="X-ray"/>
    <property type="resolution" value="1.42 A"/>
    <property type="chains" value="A/B=2-314"/>
</dbReference>
<dbReference type="PDB" id="3W1L">
    <property type="method" value="X-ray"/>
    <property type="resolution" value="1.70 A"/>
    <property type="chains" value="A/B=2-314"/>
</dbReference>
<dbReference type="PDB" id="3W1M">
    <property type="method" value="X-ray"/>
    <property type="resolution" value="1.90 A"/>
    <property type="chains" value="A/B=2-314"/>
</dbReference>
<dbReference type="PDB" id="3W1N">
    <property type="method" value="X-ray"/>
    <property type="resolution" value="2.40 A"/>
    <property type="chains" value="A/B=2-314"/>
</dbReference>
<dbReference type="PDB" id="3W1P">
    <property type="method" value="X-ray"/>
    <property type="resolution" value="2.00 A"/>
    <property type="chains" value="A/B=2-314"/>
</dbReference>
<dbReference type="PDB" id="3W1Q">
    <property type="method" value="X-ray"/>
    <property type="resolution" value="1.85 A"/>
    <property type="chains" value="A/B=2-314"/>
</dbReference>
<dbReference type="PDB" id="3W1R">
    <property type="method" value="X-ray"/>
    <property type="resolution" value="1.58 A"/>
    <property type="chains" value="A/B=2-314"/>
</dbReference>
<dbReference type="PDB" id="3W1T">
    <property type="method" value="X-ray"/>
    <property type="resolution" value="1.68 A"/>
    <property type="chains" value="A/B=2-314"/>
</dbReference>
<dbReference type="PDB" id="3W1U">
    <property type="method" value="X-ray"/>
    <property type="resolution" value="1.85 A"/>
    <property type="chains" value="A/B=2-314"/>
</dbReference>
<dbReference type="PDB" id="3W1X">
    <property type="method" value="X-ray"/>
    <property type="resolution" value="1.45 A"/>
    <property type="chains" value="A/B=2-314"/>
</dbReference>
<dbReference type="PDB" id="3W22">
    <property type="method" value="X-ray"/>
    <property type="resolution" value="1.98 A"/>
    <property type="chains" value="A/B=2-314"/>
</dbReference>
<dbReference type="PDB" id="3W23">
    <property type="method" value="X-ray"/>
    <property type="resolution" value="1.48 A"/>
    <property type="chains" value="A/B=2-314"/>
</dbReference>
<dbReference type="PDB" id="3W2J">
    <property type="method" value="X-ray"/>
    <property type="resolution" value="1.42 A"/>
    <property type="chains" value="A/B=2-314"/>
</dbReference>
<dbReference type="PDB" id="3W2K">
    <property type="method" value="X-ray"/>
    <property type="resolution" value="1.54 A"/>
    <property type="chains" value="A/B=2-314"/>
</dbReference>
<dbReference type="PDB" id="3W2L">
    <property type="method" value="X-ray"/>
    <property type="resolution" value="1.64 A"/>
    <property type="chains" value="A/B=2-314"/>
</dbReference>
<dbReference type="PDB" id="3W2M">
    <property type="method" value="X-ray"/>
    <property type="resolution" value="1.58 A"/>
    <property type="chains" value="A/B=2-314"/>
</dbReference>
<dbReference type="PDB" id="3W2N">
    <property type="method" value="X-ray"/>
    <property type="resolution" value="1.96 A"/>
    <property type="chains" value="A/B=2-314"/>
</dbReference>
<dbReference type="PDB" id="3W2U">
    <property type="method" value="X-ray"/>
    <property type="resolution" value="2.25 A"/>
    <property type="chains" value="A/B=2-314"/>
</dbReference>
<dbReference type="PDB" id="3W3O">
    <property type="method" value="X-ray"/>
    <property type="resolution" value="1.96 A"/>
    <property type="chains" value="A/B=2-314"/>
</dbReference>
<dbReference type="PDB" id="3W6Y">
    <property type="method" value="X-ray"/>
    <property type="resolution" value="2.68 A"/>
    <property type="chains" value="A/B=2-314"/>
</dbReference>
<dbReference type="PDB" id="3W70">
    <property type="method" value="X-ray"/>
    <property type="resolution" value="2.60 A"/>
    <property type="chains" value="A/B=2-314"/>
</dbReference>
<dbReference type="PDB" id="3W71">
    <property type="method" value="X-ray"/>
    <property type="resolution" value="1.68 A"/>
    <property type="chains" value="A/B=2-314"/>
</dbReference>
<dbReference type="PDB" id="3W72">
    <property type="method" value="X-ray"/>
    <property type="resolution" value="1.55 A"/>
    <property type="chains" value="A/B=2-314"/>
</dbReference>
<dbReference type="PDB" id="3W73">
    <property type="method" value="X-ray"/>
    <property type="resolution" value="1.78 A"/>
    <property type="chains" value="A/B=2-314"/>
</dbReference>
<dbReference type="PDB" id="3W74">
    <property type="method" value="X-ray"/>
    <property type="resolution" value="1.90 A"/>
    <property type="chains" value="A/B=2-314"/>
</dbReference>
<dbReference type="PDB" id="3W75">
    <property type="method" value="X-ray"/>
    <property type="resolution" value="1.47 A"/>
    <property type="chains" value="A/B=2-314"/>
</dbReference>
<dbReference type="PDB" id="3W76">
    <property type="method" value="X-ray"/>
    <property type="resolution" value="1.58 A"/>
    <property type="chains" value="A/B=2-314"/>
</dbReference>
<dbReference type="PDB" id="3W7C">
    <property type="method" value="X-ray"/>
    <property type="resolution" value="1.75 A"/>
    <property type="chains" value="A/B=2-314"/>
</dbReference>
<dbReference type="PDB" id="3W7D">
    <property type="method" value="X-ray"/>
    <property type="resolution" value="1.52 A"/>
    <property type="chains" value="A/B=2-314"/>
</dbReference>
<dbReference type="PDB" id="3W7E">
    <property type="method" value="X-ray"/>
    <property type="resolution" value="1.56 A"/>
    <property type="chains" value="A/B=2-314"/>
</dbReference>
<dbReference type="PDB" id="3W7G">
    <property type="method" value="X-ray"/>
    <property type="resolution" value="1.55 A"/>
    <property type="chains" value="A/B=2-314"/>
</dbReference>
<dbReference type="PDB" id="3W7H">
    <property type="method" value="X-ray"/>
    <property type="resolution" value="1.67 A"/>
    <property type="chains" value="A/B=2-314"/>
</dbReference>
<dbReference type="PDB" id="3W7I">
    <property type="method" value="X-ray"/>
    <property type="resolution" value="1.69 A"/>
    <property type="chains" value="A/B=2-314"/>
</dbReference>
<dbReference type="PDB" id="3W7J">
    <property type="method" value="X-ray"/>
    <property type="resolution" value="1.58 A"/>
    <property type="chains" value="A/B=2-314"/>
</dbReference>
<dbReference type="PDB" id="3W7K">
    <property type="method" value="X-ray"/>
    <property type="resolution" value="1.61 A"/>
    <property type="chains" value="A/B=2-314"/>
</dbReference>
<dbReference type="PDB" id="3W7L">
    <property type="method" value="X-ray"/>
    <property type="resolution" value="1.88 A"/>
    <property type="chains" value="A/B=2-314"/>
</dbReference>
<dbReference type="PDB" id="3W7M">
    <property type="method" value="X-ray"/>
    <property type="resolution" value="2.40 A"/>
    <property type="chains" value="A/B=2-314"/>
</dbReference>
<dbReference type="PDB" id="3W7N">
    <property type="method" value="X-ray"/>
    <property type="resolution" value="2.39 A"/>
    <property type="chains" value="A/B=2-314"/>
</dbReference>
<dbReference type="PDB" id="3W7O">
    <property type="method" value="X-ray"/>
    <property type="resolution" value="1.68 A"/>
    <property type="chains" value="A/B=2-314"/>
</dbReference>
<dbReference type="PDB" id="3W7P">
    <property type="method" value="X-ray"/>
    <property type="resolution" value="1.70 A"/>
    <property type="chains" value="A/B=2-314"/>
</dbReference>
<dbReference type="PDB" id="3W7Q">
    <property type="method" value="X-ray"/>
    <property type="resolution" value="1.83 A"/>
    <property type="chains" value="A/B=2-314"/>
</dbReference>
<dbReference type="PDB" id="3W83">
    <property type="method" value="X-ray"/>
    <property type="resolution" value="2.80 A"/>
    <property type="chains" value="A/B=2-314"/>
</dbReference>
<dbReference type="PDB" id="3W84">
    <property type="method" value="X-ray"/>
    <property type="resolution" value="1.93 A"/>
    <property type="chains" value="A/B=2-314"/>
</dbReference>
<dbReference type="PDB" id="3W85">
    <property type="method" value="X-ray"/>
    <property type="resolution" value="2.00 A"/>
    <property type="chains" value="A/B=2-314"/>
</dbReference>
<dbReference type="PDB" id="3W86">
    <property type="method" value="X-ray"/>
    <property type="resolution" value="1.50 A"/>
    <property type="chains" value="A/B=2-314"/>
</dbReference>
<dbReference type="PDB" id="3W87">
    <property type="method" value="X-ray"/>
    <property type="resolution" value="1.43 A"/>
    <property type="chains" value="A/B=2-314"/>
</dbReference>
<dbReference type="PDB" id="3W88">
    <property type="method" value="X-ray"/>
    <property type="resolution" value="1.40 A"/>
    <property type="chains" value="A/B=2-314"/>
</dbReference>
<dbReference type="PDB" id="4JD4">
    <property type="method" value="X-ray"/>
    <property type="resolution" value="1.51 A"/>
    <property type="chains" value="A/B=2-314"/>
</dbReference>
<dbReference type="PDB" id="4JDB">
    <property type="method" value="X-ray"/>
    <property type="resolution" value="1.82 A"/>
    <property type="chains" value="A/B=2-314"/>
</dbReference>
<dbReference type="PDB" id="5E93">
    <property type="method" value="X-ray"/>
    <property type="resolution" value="1.41 A"/>
    <property type="chains" value="A/B=2-314"/>
</dbReference>
<dbReference type="PDB" id="5EA9">
    <property type="method" value="X-ray"/>
    <property type="resolution" value="1.71 A"/>
    <property type="chains" value="A/B=2-314"/>
</dbReference>
<dbReference type="PDBsum" id="2DJL"/>
<dbReference type="PDBsum" id="2DJX"/>
<dbReference type="PDBsum" id="2E68"/>
<dbReference type="PDBsum" id="2E6A"/>
<dbReference type="PDBsum" id="2E6D"/>
<dbReference type="PDBsum" id="2E6F"/>
<dbReference type="PDBsum" id="3C3N"/>
<dbReference type="PDBsum" id="3W1A"/>
<dbReference type="PDBsum" id="3W1L"/>
<dbReference type="PDBsum" id="3W1M"/>
<dbReference type="PDBsum" id="3W1N"/>
<dbReference type="PDBsum" id="3W1P"/>
<dbReference type="PDBsum" id="3W1Q"/>
<dbReference type="PDBsum" id="3W1R"/>
<dbReference type="PDBsum" id="3W1T"/>
<dbReference type="PDBsum" id="3W1U"/>
<dbReference type="PDBsum" id="3W1X"/>
<dbReference type="PDBsum" id="3W22"/>
<dbReference type="PDBsum" id="3W23"/>
<dbReference type="PDBsum" id="3W2J"/>
<dbReference type="PDBsum" id="3W2K"/>
<dbReference type="PDBsum" id="3W2L"/>
<dbReference type="PDBsum" id="3W2M"/>
<dbReference type="PDBsum" id="3W2N"/>
<dbReference type="PDBsum" id="3W2U"/>
<dbReference type="PDBsum" id="3W3O"/>
<dbReference type="PDBsum" id="3W6Y"/>
<dbReference type="PDBsum" id="3W70"/>
<dbReference type="PDBsum" id="3W71"/>
<dbReference type="PDBsum" id="3W72"/>
<dbReference type="PDBsum" id="3W73"/>
<dbReference type="PDBsum" id="3W74"/>
<dbReference type="PDBsum" id="3W75"/>
<dbReference type="PDBsum" id="3W76"/>
<dbReference type="PDBsum" id="3W7C"/>
<dbReference type="PDBsum" id="3W7D"/>
<dbReference type="PDBsum" id="3W7E"/>
<dbReference type="PDBsum" id="3W7G"/>
<dbReference type="PDBsum" id="3W7H"/>
<dbReference type="PDBsum" id="3W7I"/>
<dbReference type="PDBsum" id="3W7J"/>
<dbReference type="PDBsum" id="3W7K"/>
<dbReference type="PDBsum" id="3W7L"/>
<dbReference type="PDBsum" id="3W7M"/>
<dbReference type="PDBsum" id="3W7N"/>
<dbReference type="PDBsum" id="3W7O"/>
<dbReference type="PDBsum" id="3W7P"/>
<dbReference type="PDBsum" id="3W7Q"/>
<dbReference type="PDBsum" id="3W83"/>
<dbReference type="PDBsum" id="3W84"/>
<dbReference type="PDBsum" id="3W85"/>
<dbReference type="PDBsum" id="3W86"/>
<dbReference type="PDBsum" id="3W87"/>
<dbReference type="PDBsum" id="3W88"/>
<dbReference type="PDBsum" id="4JD4"/>
<dbReference type="PDBsum" id="4JDB"/>
<dbReference type="PDBsum" id="5E93"/>
<dbReference type="PDBsum" id="5EA9"/>
<dbReference type="SMR" id="Q4D3W2"/>
<dbReference type="FunCoup" id="Q4D3W2">
    <property type="interactions" value="406"/>
</dbReference>
<dbReference type="STRING" id="353153.Q4D3W2"/>
<dbReference type="PaxDb" id="353153-Q4D3W2"/>
<dbReference type="EnsemblProtists" id="EAN87213">
    <property type="protein sequence ID" value="EAN87213"/>
    <property type="gene ID" value="Tc00.1047053508375.50"/>
</dbReference>
<dbReference type="GeneID" id="3539620"/>
<dbReference type="KEGG" id="tcr:508375.50"/>
<dbReference type="eggNOG" id="KOG1436">
    <property type="taxonomic scope" value="Eukaryota"/>
</dbReference>
<dbReference type="InParanoid" id="Q4D3W2"/>
<dbReference type="OMA" id="FDFAHFD"/>
<dbReference type="BioCyc" id="MetaCyc:MONOMER-14470"/>
<dbReference type="BRENDA" id="1.3.98.1">
    <property type="organism ID" value="6524"/>
</dbReference>
<dbReference type="UniPathway" id="UPA00070"/>
<dbReference type="EvolutionaryTrace" id="Q4D3W2"/>
<dbReference type="PHI-base" id="PHI:2575"/>
<dbReference type="PHI-base" id="PHI:2596"/>
<dbReference type="Proteomes" id="UP000002296">
    <property type="component" value="Unassembled WGS sequence"/>
</dbReference>
<dbReference type="GO" id="GO:0005737">
    <property type="term" value="C:cytoplasm"/>
    <property type="evidence" value="ECO:0007669"/>
    <property type="project" value="UniProtKB-SubCell"/>
</dbReference>
<dbReference type="GO" id="GO:1990663">
    <property type="term" value="F:dihydroorotate dehydrogenase (fumarate) activity"/>
    <property type="evidence" value="ECO:0007669"/>
    <property type="project" value="UniProtKB-EC"/>
</dbReference>
<dbReference type="GO" id="GO:0006207">
    <property type="term" value="P:'de novo' pyrimidine nucleobase biosynthetic process"/>
    <property type="evidence" value="ECO:0007669"/>
    <property type="project" value="TreeGrafter"/>
</dbReference>
<dbReference type="GO" id="GO:0044205">
    <property type="term" value="P:'de novo' UMP biosynthetic process"/>
    <property type="evidence" value="ECO:0007669"/>
    <property type="project" value="UniProtKB-UniPathway"/>
</dbReference>
<dbReference type="CDD" id="cd04741">
    <property type="entry name" value="DHOD_1A_like"/>
    <property type="match status" value="1"/>
</dbReference>
<dbReference type="FunFam" id="3.20.20.70:FF:000027">
    <property type="entry name" value="Dihydropyrimidine dehydrogenase [NADP(+)]"/>
    <property type="match status" value="1"/>
</dbReference>
<dbReference type="Gene3D" id="3.20.20.70">
    <property type="entry name" value="Aldolase class I"/>
    <property type="match status" value="1"/>
</dbReference>
<dbReference type="InterPro" id="IPR013785">
    <property type="entry name" value="Aldolase_TIM"/>
</dbReference>
<dbReference type="InterPro" id="IPR050074">
    <property type="entry name" value="DHO_dehydrogenase"/>
</dbReference>
<dbReference type="InterPro" id="IPR033886">
    <property type="entry name" value="DHOD_1A"/>
</dbReference>
<dbReference type="InterPro" id="IPR012135">
    <property type="entry name" value="Dihydroorotate_DH_1_2"/>
</dbReference>
<dbReference type="InterPro" id="IPR005720">
    <property type="entry name" value="Dihydroorotate_DH_cat"/>
</dbReference>
<dbReference type="NCBIfam" id="NF002702">
    <property type="entry name" value="PRK02506.1"/>
    <property type="match status" value="1"/>
</dbReference>
<dbReference type="PANTHER" id="PTHR48109:SF1">
    <property type="entry name" value="DIHYDROOROTATE DEHYDROGENASE (FUMARATE)"/>
    <property type="match status" value="1"/>
</dbReference>
<dbReference type="PANTHER" id="PTHR48109">
    <property type="entry name" value="DIHYDROOROTATE DEHYDROGENASE (QUINONE), MITOCHONDRIAL-RELATED"/>
    <property type="match status" value="1"/>
</dbReference>
<dbReference type="Pfam" id="PF01180">
    <property type="entry name" value="DHO_dh"/>
    <property type="match status" value="1"/>
</dbReference>
<dbReference type="PIRSF" id="PIRSF000164">
    <property type="entry name" value="DHO_oxidase"/>
    <property type="match status" value="1"/>
</dbReference>
<dbReference type="SUPFAM" id="SSF51395">
    <property type="entry name" value="FMN-linked oxidoreductases"/>
    <property type="match status" value="1"/>
</dbReference>
<gene>
    <name type="primary">pyr4</name>
    <name type="synonym">tcdhod2</name>
    <name type="ORF">Tc00.1047053508375.50</name>
</gene>
<keyword id="KW-0002">3D-structure</keyword>
<keyword id="KW-0963">Cytoplasm</keyword>
<keyword id="KW-0285">Flavoprotein</keyword>
<keyword id="KW-0288">FMN</keyword>
<keyword id="KW-0560">Oxidoreductase</keyword>
<keyword id="KW-0665">Pyrimidine biosynthesis</keyword>
<keyword id="KW-1185">Reference proteome</keyword>
<protein>
    <recommendedName>
        <fullName>Dihydroorotate dehydrogenase (fumarate)</fullName>
        <shortName>DHOD</shortName>
        <shortName>DHODase</shortName>
        <shortName>DHOdehase</shortName>
        <ecNumber>1.3.98.1</ecNumber>
    </recommendedName>
    <alternativeName>
        <fullName>Dihydroorotate oxidase</fullName>
    </alternativeName>
</protein>
<feature type="chain" id="PRO_0000409558" description="Dihydroorotate dehydrogenase (fumarate)">
    <location>
        <begin position="1"/>
        <end position="314"/>
    </location>
</feature>
<feature type="active site" description="Nucleophile" evidence="1">
    <location>
        <position position="132"/>
    </location>
</feature>
<feature type="binding site" evidence="3">
    <location>
        <position position="21"/>
    </location>
    <ligand>
        <name>FMN</name>
        <dbReference type="ChEBI" id="CHEBI:58210"/>
    </ligand>
</feature>
<feature type="binding site" evidence="3">
    <location>
        <begin position="45"/>
        <end position="46"/>
    </location>
    <ligand>
        <name>FMN</name>
        <dbReference type="ChEBI" id="CHEBI:58210"/>
    </ligand>
</feature>
<feature type="binding site">
    <location>
        <position position="45"/>
    </location>
    <ligand>
        <name>substrate</name>
    </ligand>
</feature>
<feature type="binding site">
    <location>
        <begin position="69"/>
        <end position="73"/>
    </location>
    <ligand>
        <name>substrate</name>
    </ligand>
</feature>
<feature type="binding site" evidence="3">
    <location>
        <position position="129"/>
    </location>
    <ligand>
        <name>FMN</name>
        <dbReference type="ChEBI" id="CHEBI:58210"/>
    </ligand>
</feature>
<feature type="binding site">
    <location>
        <position position="129"/>
    </location>
    <ligand>
        <name>substrate</name>
    </ligand>
</feature>
<feature type="binding site">
    <location>
        <position position="134"/>
    </location>
    <ligand>
        <name>substrate</name>
    </ligand>
</feature>
<feature type="binding site" evidence="3">
    <location>
        <position position="166"/>
    </location>
    <ligand>
        <name>FMN</name>
        <dbReference type="ChEBI" id="CHEBI:58210"/>
    </ligand>
</feature>
<feature type="binding site" evidence="3">
    <location>
        <position position="195"/>
    </location>
    <ligand>
        <name>FMN</name>
        <dbReference type="ChEBI" id="CHEBI:58210"/>
    </ligand>
</feature>
<feature type="binding site">
    <location>
        <begin position="196"/>
        <end position="197"/>
    </location>
    <ligand>
        <name>substrate</name>
    </ligand>
</feature>
<feature type="binding site" evidence="3">
    <location>
        <position position="224"/>
    </location>
    <ligand>
        <name>FMN</name>
        <dbReference type="ChEBI" id="CHEBI:58210"/>
    </ligand>
</feature>
<feature type="binding site" evidence="3">
    <location>
        <begin position="251"/>
        <end position="252"/>
    </location>
    <ligand>
        <name>FMN</name>
        <dbReference type="ChEBI" id="CHEBI:58210"/>
    </ligand>
</feature>
<feature type="binding site" evidence="3">
    <location>
        <begin position="273"/>
        <end position="274"/>
    </location>
    <ligand>
        <name>FMN</name>
        <dbReference type="ChEBI" id="CHEBI:58210"/>
    </ligand>
</feature>
<feature type="sequence variant" description="In allele DHOD3.">
    <original>M</original>
    <variation>T</variation>
    <location>
        <position position="2"/>
    </location>
</feature>
<feature type="sequence variant" description="In alleles DHOD2 and DHOD3.">
    <original>C</original>
    <variation>R</variation>
    <location>
        <position position="3"/>
    </location>
</feature>
<feature type="sequence variant" description="In allele DHOD2.">
    <original>F</original>
    <variation>V</variation>
    <location>
        <position position="63"/>
    </location>
</feature>
<feature type="sequence variant" description="In alleles DHOD2 and DHOD3.">
    <original>S</original>
    <variation>I</variation>
    <location>
        <position position="86"/>
    </location>
</feature>
<feature type="sequence variant" description="In allele DHOD3.">
    <original>L</original>
    <variation>V</variation>
    <location>
        <position position="98"/>
    </location>
</feature>
<feature type="sequence variant" description="In alleles DHOD2 and DHOD3.">
    <original>L</original>
    <variation>I</variation>
    <location>
        <position position="222"/>
    </location>
</feature>
<feature type="sequence variant" description="In allele DHOD3.">
    <original>T</original>
    <variation>R</variation>
    <location>
        <position position="285"/>
    </location>
</feature>
<feature type="sequence variant" description="In allele DHOD2.">
    <original>R</original>
    <variation>K</variation>
    <location>
        <position position="301"/>
    </location>
</feature>
<feature type="sequence conflict" description="In Ref. 1; BAA74526/BAA31360." evidence="5" ref="1">
    <original>E</original>
    <variation>G</variation>
    <location>
        <position position="121"/>
    </location>
</feature>
<feature type="sequence conflict" description="In Ref. 1; BAA74526/BAA31360." evidence="5" ref="1">
    <original>V</original>
    <variation>G</variation>
    <location>
        <position position="141"/>
    </location>
</feature>
<feature type="strand" evidence="7">
    <location>
        <begin position="6"/>
        <end position="8"/>
    </location>
</feature>
<feature type="strand" evidence="7">
    <location>
        <begin position="11"/>
        <end position="19"/>
    </location>
</feature>
<feature type="helix" evidence="7">
    <location>
        <begin position="28"/>
        <end position="36"/>
    </location>
</feature>
<feature type="strand" evidence="6">
    <location>
        <begin position="40"/>
        <end position="43"/>
    </location>
</feature>
<feature type="strand" evidence="7">
    <location>
        <begin position="60"/>
        <end position="63"/>
    </location>
</feature>
<feature type="strand" evidence="7">
    <location>
        <begin position="66"/>
        <end position="69"/>
    </location>
</feature>
<feature type="helix" evidence="7">
    <location>
        <begin position="78"/>
        <end position="87"/>
    </location>
</feature>
<feature type="turn" evidence="7">
    <location>
        <begin position="91"/>
        <end position="93"/>
    </location>
</feature>
<feature type="strand" evidence="7">
    <location>
        <begin position="96"/>
        <end position="100"/>
    </location>
</feature>
<feature type="helix" evidence="7">
    <location>
        <begin position="105"/>
        <end position="122"/>
    </location>
</feature>
<feature type="strand" evidence="7">
    <location>
        <begin position="125"/>
        <end position="129"/>
    </location>
</feature>
<feature type="helix" evidence="7">
    <location>
        <begin position="141"/>
        <end position="143"/>
    </location>
</feature>
<feature type="helix" evidence="7">
    <location>
        <begin position="145"/>
        <end position="159"/>
    </location>
</feature>
<feature type="strand" evidence="7">
    <location>
        <begin position="163"/>
        <end position="167"/>
    </location>
</feature>
<feature type="helix" evidence="7">
    <location>
        <begin position="173"/>
        <end position="184"/>
    </location>
</feature>
<feature type="strand" evidence="7">
    <location>
        <begin position="189"/>
        <end position="194"/>
    </location>
</feature>
<feature type="strand" evidence="7">
    <location>
        <begin position="198"/>
        <end position="202"/>
    </location>
</feature>
<feature type="turn" evidence="7">
    <location>
        <begin position="206"/>
        <end position="209"/>
    </location>
</feature>
<feature type="strand" evidence="7">
    <location>
        <begin position="210"/>
        <end position="212"/>
    </location>
</feature>
<feature type="helix" evidence="7">
    <location>
        <begin position="215"/>
        <end position="218"/>
    </location>
</feature>
<feature type="strand" evidence="7">
    <location>
        <begin position="219"/>
        <end position="224"/>
    </location>
</feature>
<feature type="helix" evidence="7">
    <location>
        <begin position="225"/>
        <end position="227"/>
    </location>
</feature>
<feature type="helix" evidence="7">
    <location>
        <begin position="228"/>
        <end position="241"/>
    </location>
</feature>
<feature type="strand" evidence="7">
    <location>
        <begin position="245"/>
        <end position="252"/>
    </location>
</feature>
<feature type="helix" evidence="7">
    <location>
        <begin position="256"/>
        <end position="265"/>
    </location>
</feature>
<feature type="strand" evidence="7">
    <location>
        <begin position="268"/>
        <end position="272"/>
    </location>
</feature>
<feature type="helix" evidence="7">
    <location>
        <begin position="274"/>
        <end position="279"/>
    </location>
</feature>
<feature type="helix" evidence="7">
    <location>
        <begin position="283"/>
        <end position="298"/>
    </location>
</feature>
<feature type="turn" evidence="7">
    <location>
        <begin position="304"/>
        <end position="308"/>
    </location>
</feature>
<reference key="1">
    <citation type="journal article" date="2005" name="Science">
        <title>The genome sequence of Trypanosoma cruzi, etiologic agent of Chagas disease.</title>
        <authorList>
            <person name="El-Sayed N.M.A."/>
            <person name="Myler P.J."/>
            <person name="Bartholomeu D.C."/>
            <person name="Nilsson D."/>
            <person name="Aggarwal G."/>
            <person name="Tran A.-N."/>
            <person name="Ghedin E."/>
            <person name="Worthey E.A."/>
            <person name="Delcher A.L."/>
            <person name="Blandin G."/>
            <person name="Westenberger S.J."/>
            <person name="Caler E."/>
            <person name="Cerqueira G.C."/>
            <person name="Branche C."/>
            <person name="Haas B."/>
            <person name="Anupama A."/>
            <person name="Arner E."/>
            <person name="Aslund L."/>
            <person name="Attipoe P."/>
            <person name="Bontempi E."/>
            <person name="Bringaud F."/>
            <person name="Burton P."/>
            <person name="Cadag E."/>
            <person name="Campbell D.A."/>
            <person name="Carrington M."/>
            <person name="Crabtree J."/>
            <person name="Darban H."/>
            <person name="da Silveira J.F."/>
            <person name="de Jong P."/>
            <person name="Edwards K."/>
            <person name="Englund P.T."/>
            <person name="Fazelina G."/>
            <person name="Feldblyum T."/>
            <person name="Ferella M."/>
            <person name="Frasch A.C."/>
            <person name="Gull K."/>
            <person name="Horn D."/>
            <person name="Hou L."/>
            <person name="Huang Y."/>
            <person name="Kindlund E."/>
            <person name="Klingbeil M."/>
            <person name="Kluge S."/>
            <person name="Koo H."/>
            <person name="Lacerda D."/>
            <person name="Levin M.J."/>
            <person name="Lorenzi H."/>
            <person name="Louie T."/>
            <person name="Machado C.R."/>
            <person name="McCulloch R."/>
            <person name="McKenna A."/>
            <person name="Mizuno Y."/>
            <person name="Mottram J.C."/>
            <person name="Nelson S."/>
            <person name="Ochaya S."/>
            <person name="Osoegawa K."/>
            <person name="Pai G."/>
            <person name="Parsons M."/>
            <person name="Pentony M."/>
            <person name="Pettersson U."/>
            <person name="Pop M."/>
            <person name="Ramirez J.L."/>
            <person name="Rinta J."/>
            <person name="Robertson L."/>
            <person name="Salzberg S.L."/>
            <person name="Sanchez D.O."/>
            <person name="Seyler A."/>
            <person name="Sharma R."/>
            <person name="Shetty J."/>
            <person name="Simpson A.J."/>
            <person name="Sisk E."/>
            <person name="Tammi M.T."/>
            <person name="Tarleton R."/>
            <person name="Teixeira S."/>
            <person name="Van Aken S."/>
            <person name="Vogt C."/>
            <person name="Ward P.N."/>
            <person name="Wickstead B."/>
            <person name="Wortman J."/>
            <person name="White O."/>
            <person name="Fraser C.M."/>
            <person name="Stuart K.D."/>
            <person name="Andersson B."/>
        </authorList>
    </citation>
    <scope>NUCLEOTIDE SEQUENCE [LARGE SCALE GENOMIC DNA] (ALLELE DHOD1)</scope>
    <source>
        <strain>CL Brener</strain>
    </source>
</reference>
<reference key="2">
    <citation type="journal article" date="1999" name="J. Mol. Biol.">
        <title>Novel organization and sequences of five genes encoding all six enzymes for de novo pyrimidine biosynthesis in Trypanosoma cruzi.</title>
        <authorList>
            <person name="Gao G."/>
            <person name="Nara T."/>
            <person name="Nakajima-Shimada J."/>
            <person name="Aoki T."/>
        </authorList>
    </citation>
    <scope>NUCLEOTIDE SEQUENCE [GENOMIC DNA] (ALLELE DHOD1)</scope>
    <source>
        <strain>Tulahuen</strain>
    </source>
</reference>
<reference key="3">
    <citation type="journal article" date="2006" name="Parasitol. Int.">
        <title>Genetic diversity and kinetic properties of Trypanosoma cruzi dihydroorotate dehydrogenase isoforms.</title>
        <authorList>
            <person name="Sariego I."/>
            <person name="Annoura T."/>
            <person name="Nara T."/>
            <person name="Hashimoto M."/>
            <person name="Tsubouchi A."/>
            <person name="Iizumi K."/>
            <person name="Makiuchi T."/>
            <person name="Murata E."/>
            <person name="Kita K."/>
            <person name="Aoki T."/>
        </authorList>
    </citation>
    <scope>NUCLEOTIDE SEQUENCE [GENOMIC DNA] (ALLELES DHOD1; DHOD2 AND DHOD3)</scope>
    <scope>BIOPHYSICOCHEMICAL PROPERTIES</scope>
    <source>
        <strain>Tulahuen</strain>
    </source>
</reference>
<reference key="4">
    <citation type="journal article" date="2008" name="Biochemistry">
        <title>Structures of Trypanosoma cruzi dihydroorotate dehydrogenase complexed with substrates and products: atomic resolution insights into mechanisms of dihydroorotate oxidation and fumarate reduction.</title>
        <authorList>
            <person name="Inaoka D.K."/>
            <person name="Sakamoto K."/>
            <person name="Shimizu H."/>
            <person name="Shiba T."/>
            <person name="Kurisu G."/>
            <person name="Nara T."/>
            <person name="Aoki T."/>
            <person name="Kita K."/>
            <person name="Harada S."/>
        </authorList>
    </citation>
    <scope>X-RAY CRYSTALLOGRAPHY (1.38 ANGSTROMS) OF APOENZYME AND IN COMPLEXES WITH FMN; DIHYDROOROTATE; OROTATE; FUMARATE AND SUCCINATE</scope>
    <scope>COFACTOR</scope>
    <scope>REACTION MECHANISM</scope>
    <source>
        <strain>Tulahuen</strain>
    </source>
</reference>
<reference key="5">
    <citation type="journal article" date="2008" name="Biochem. Biophys. Res. Commun.">
        <title>Crystal structure of Trypanosoma cruzi dihydroorotate dehydrogenase from Y strain.</title>
        <authorList>
            <person name="Pinheiro M.P."/>
            <person name="Iulek J."/>
            <person name="Cristina Nonato M."/>
        </authorList>
    </citation>
    <scope>X-RAY CRYSTALLOGRAPHY (2.2 ANGSTROMS) OF 3-314 IN COMPLEX WITH FMN</scope>
    <source>
        <strain>Y</strain>
    </source>
</reference>